<feature type="chain" id="PRO_0000335088" description="Glutamyl-tRNA reductase">
    <location>
        <begin position="1"/>
        <end position="454"/>
    </location>
</feature>
<feature type="region of interest" description="Disordered" evidence="2">
    <location>
        <begin position="407"/>
        <end position="454"/>
    </location>
</feature>
<feature type="compositionally biased region" description="Basic and acidic residues" evidence="2">
    <location>
        <begin position="418"/>
        <end position="434"/>
    </location>
</feature>
<feature type="compositionally biased region" description="Basic and acidic residues" evidence="2">
    <location>
        <begin position="443"/>
        <end position="454"/>
    </location>
</feature>
<feature type="active site" description="Nucleophile" evidence="1">
    <location>
        <position position="51"/>
    </location>
</feature>
<feature type="binding site" evidence="1">
    <location>
        <begin position="50"/>
        <end position="53"/>
    </location>
    <ligand>
        <name>substrate</name>
    </ligand>
</feature>
<feature type="binding site" evidence="1">
    <location>
        <position position="103"/>
    </location>
    <ligand>
        <name>substrate</name>
    </ligand>
</feature>
<feature type="binding site" evidence="1">
    <location>
        <begin position="108"/>
        <end position="110"/>
    </location>
    <ligand>
        <name>substrate</name>
    </ligand>
</feature>
<feature type="binding site" evidence="1">
    <location>
        <position position="114"/>
    </location>
    <ligand>
        <name>substrate</name>
    </ligand>
</feature>
<feature type="binding site" evidence="1">
    <location>
        <begin position="182"/>
        <end position="187"/>
    </location>
    <ligand>
        <name>NADP(+)</name>
        <dbReference type="ChEBI" id="CHEBI:58349"/>
    </ligand>
</feature>
<feature type="site" description="Important for activity" evidence="1">
    <location>
        <position position="93"/>
    </location>
</feature>
<name>HEM1_HALWD</name>
<organism>
    <name type="scientific">Haloquadratum walsbyi (strain DSM 16790 / HBSQ001)</name>
    <dbReference type="NCBI Taxonomy" id="362976"/>
    <lineage>
        <taxon>Archaea</taxon>
        <taxon>Methanobacteriati</taxon>
        <taxon>Methanobacteriota</taxon>
        <taxon>Stenosarchaea group</taxon>
        <taxon>Halobacteria</taxon>
        <taxon>Halobacteriales</taxon>
        <taxon>Haloferacaceae</taxon>
        <taxon>Haloquadratum</taxon>
    </lineage>
</organism>
<dbReference type="EC" id="1.2.1.70" evidence="1"/>
<dbReference type="EMBL" id="AM180088">
    <property type="protein sequence ID" value="CAJ53433.1"/>
    <property type="molecule type" value="Genomic_DNA"/>
</dbReference>
<dbReference type="RefSeq" id="WP_011572535.1">
    <property type="nucleotide sequence ID" value="NC_008212.1"/>
</dbReference>
<dbReference type="SMR" id="Q18F28"/>
<dbReference type="STRING" id="362976.HQ_3336A"/>
<dbReference type="GeneID" id="4194102"/>
<dbReference type="KEGG" id="hwa:HQ_3336A"/>
<dbReference type="eggNOG" id="arCOG01036">
    <property type="taxonomic scope" value="Archaea"/>
</dbReference>
<dbReference type="HOGENOM" id="CLU_035113_0_1_2"/>
<dbReference type="UniPathway" id="UPA00251">
    <property type="reaction ID" value="UER00316"/>
</dbReference>
<dbReference type="Proteomes" id="UP000001975">
    <property type="component" value="Chromosome"/>
</dbReference>
<dbReference type="GO" id="GO:0008883">
    <property type="term" value="F:glutamyl-tRNA reductase activity"/>
    <property type="evidence" value="ECO:0007669"/>
    <property type="project" value="UniProtKB-UniRule"/>
</dbReference>
<dbReference type="GO" id="GO:0050661">
    <property type="term" value="F:NADP binding"/>
    <property type="evidence" value="ECO:0007669"/>
    <property type="project" value="InterPro"/>
</dbReference>
<dbReference type="GO" id="GO:0019353">
    <property type="term" value="P:protoporphyrinogen IX biosynthetic process from glutamate"/>
    <property type="evidence" value="ECO:0007669"/>
    <property type="project" value="TreeGrafter"/>
</dbReference>
<dbReference type="CDD" id="cd05213">
    <property type="entry name" value="NAD_bind_Glutamyl_tRNA_reduct"/>
    <property type="match status" value="1"/>
</dbReference>
<dbReference type="Gene3D" id="3.30.460.30">
    <property type="entry name" value="Glutamyl-tRNA reductase, N-terminal domain"/>
    <property type="match status" value="1"/>
</dbReference>
<dbReference type="Gene3D" id="3.40.50.720">
    <property type="entry name" value="NAD(P)-binding Rossmann-like Domain"/>
    <property type="match status" value="1"/>
</dbReference>
<dbReference type="HAMAP" id="MF_00087">
    <property type="entry name" value="Glu_tRNA_reductase"/>
    <property type="match status" value="1"/>
</dbReference>
<dbReference type="InterPro" id="IPR000343">
    <property type="entry name" value="4pyrrol_synth_GluRdtase"/>
</dbReference>
<dbReference type="InterPro" id="IPR015896">
    <property type="entry name" value="4pyrrol_synth_GluRdtase_dimer"/>
</dbReference>
<dbReference type="InterPro" id="IPR015895">
    <property type="entry name" value="4pyrrol_synth_GluRdtase_N"/>
</dbReference>
<dbReference type="InterPro" id="IPR018214">
    <property type="entry name" value="GluRdtase_CS"/>
</dbReference>
<dbReference type="InterPro" id="IPR036453">
    <property type="entry name" value="GluRdtase_dimer_dom_sf"/>
</dbReference>
<dbReference type="InterPro" id="IPR036343">
    <property type="entry name" value="GluRdtase_N_sf"/>
</dbReference>
<dbReference type="InterPro" id="IPR036291">
    <property type="entry name" value="NAD(P)-bd_dom_sf"/>
</dbReference>
<dbReference type="InterPro" id="IPR006151">
    <property type="entry name" value="Shikm_DH/Glu-tRNA_Rdtase"/>
</dbReference>
<dbReference type="NCBIfam" id="TIGR01035">
    <property type="entry name" value="hemA"/>
    <property type="match status" value="1"/>
</dbReference>
<dbReference type="PANTHER" id="PTHR43013">
    <property type="entry name" value="GLUTAMYL-TRNA REDUCTASE"/>
    <property type="match status" value="1"/>
</dbReference>
<dbReference type="PANTHER" id="PTHR43013:SF1">
    <property type="entry name" value="GLUTAMYL-TRNA REDUCTASE"/>
    <property type="match status" value="1"/>
</dbReference>
<dbReference type="Pfam" id="PF00745">
    <property type="entry name" value="GlutR_dimer"/>
    <property type="match status" value="1"/>
</dbReference>
<dbReference type="Pfam" id="PF05201">
    <property type="entry name" value="GlutR_N"/>
    <property type="match status" value="1"/>
</dbReference>
<dbReference type="Pfam" id="PF01488">
    <property type="entry name" value="Shikimate_DH"/>
    <property type="match status" value="1"/>
</dbReference>
<dbReference type="PIRSF" id="PIRSF000445">
    <property type="entry name" value="4pyrrol_synth_GluRdtase"/>
    <property type="match status" value="1"/>
</dbReference>
<dbReference type="SUPFAM" id="SSF69742">
    <property type="entry name" value="Glutamyl tRNA-reductase catalytic, N-terminal domain"/>
    <property type="match status" value="1"/>
</dbReference>
<dbReference type="SUPFAM" id="SSF69075">
    <property type="entry name" value="Glutamyl tRNA-reductase dimerization domain"/>
    <property type="match status" value="1"/>
</dbReference>
<dbReference type="SUPFAM" id="SSF51735">
    <property type="entry name" value="NAD(P)-binding Rossmann-fold domains"/>
    <property type="match status" value="1"/>
</dbReference>
<dbReference type="PROSITE" id="PS00747">
    <property type="entry name" value="GLUTR"/>
    <property type="match status" value="1"/>
</dbReference>
<gene>
    <name evidence="1" type="primary">hemA</name>
    <name type="ordered locus">HQ_3336A</name>
</gene>
<comment type="function">
    <text evidence="1">Catalyzes the NADPH-dependent reduction of glutamyl-tRNA(Glu) to glutamate 1-semialdehyde (GSA).</text>
</comment>
<comment type="catalytic activity">
    <reaction evidence="1">
        <text>(S)-4-amino-5-oxopentanoate + tRNA(Glu) + NADP(+) = L-glutamyl-tRNA(Glu) + NADPH + H(+)</text>
        <dbReference type="Rhea" id="RHEA:12344"/>
        <dbReference type="Rhea" id="RHEA-COMP:9663"/>
        <dbReference type="Rhea" id="RHEA-COMP:9680"/>
        <dbReference type="ChEBI" id="CHEBI:15378"/>
        <dbReference type="ChEBI" id="CHEBI:57501"/>
        <dbReference type="ChEBI" id="CHEBI:57783"/>
        <dbReference type="ChEBI" id="CHEBI:58349"/>
        <dbReference type="ChEBI" id="CHEBI:78442"/>
        <dbReference type="ChEBI" id="CHEBI:78520"/>
        <dbReference type="EC" id="1.2.1.70"/>
    </reaction>
</comment>
<comment type="pathway">
    <text evidence="1">Porphyrin-containing compound metabolism; protoporphyrin-IX biosynthesis; 5-aminolevulinate from L-glutamyl-tRNA(Glu): step 1/2.</text>
</comment>
<comment type="subunit">
    <text evidence="1">Homodimer.</text>
</comment>
<comment type="domain">
    <text evidence="1">Possesses an unusual extended V-shaped dimeric structure with each monomer consisting of three distinct domains arranged along a curved 'spinal' alpha-helix. The N-terminal catalytic domain specifically recognizes the glutamate moiety of the substrate. The second domain is the NADPH-binding domain, and the third C-terminal domain is responsible for dimerization.</text>
</comment>
<comment type="miscellaneous">
    <text evidence="1">During catalysis, the active site Cys acts as a nucleophile attacking the alpha-carbonyl group of tRNA-bound glutamate with the formation of a thioester intermediate between enzyme and glutamate, and the concomitant release of tRNA(Glu). The thioester intermediate is finally reduced by direct hydride transfer from NADPH, to form the product GSA.</text>
</comment>
<comment type="similarity">
    <text evidence="1">Belongs to the glutamyl-tRNA reductase family.</text>
</comment>
<proteinExistence type="inferred from homology"/>
<evidence type="ECO:0000255" key="1">
    <source>
        <dbReference type="HAMAP-Rule" id="MF_00087"/>
    </source>
</evidence>
<evidence type="ECO:0000256" key="2">
    <source>
        <dbReference type="SAM" id="MobiDB-lite"/>
    </source>
</evidence>
<accession>Q18F28</accession>
<reference key="1">
    <citation type="journal article" date="2006" name="BMC Genomics">
        <title>The genome of the square archaeon Haloquadratum walsbyi: life at the limits of water activity.</title>
        <authorList>
            <person name="Bolhuis H."/>
            <person name="Palm P."/>
            <person name="Wende A."/>
            <person name="Falb M."/>
            <person name="Rampp M."/>
            <person name="Rodriguez-Valera F."/>
            <person name="Pfeiffer F."/>
            <person name="Oesterhelt D."/>
        </authorList>
    </citation>
    <scope>NUCLEOTIDE SEQUENCE [LARGE SCALE GENOMIC DNA]</scope>
    <source>
        <strain>DSM 16790 / HBSQ001</strain>
    </source>
</reference>
<protein>
    <recommendedName>
        <fullName evidence="1">Glutamyl-tRNA reductase</fullName>
        <shortName evidence="1">GluTR</shortName>
        <ecNumber evidence="1">1.2.1.70</ecNumber>
    </recommendedName>
</protein>
<keyword id="KW-0521">NADP</keyword>
<keyword id="KW-0560">Oxidoreductase</keyword>
<keyword id="KW-0627">Porphyrin biosynthesis</keyword>
<keyword id="KW-1185">Reference proteome</keyword>
<sequence length="454" mass="48625">MNTGVICGVRVSHNRASVEEIELAGERDSRTIMETLLTRDGITESFAIQTCNRSEAYVVADGAVAGRRALASFAPDVRDGAVVDMSHEESLRHLLRVATGLESLVLGEDQILGQFKRAIEVARGIGALGPMLEAGVTKAIHVGERARSETSINEGAVSIGSAAVRLAGQSVGLNGRKALVIGAGEMGSLVAESLASTNISEVVIANRTIENAESIAETINSPAYAVSLDSLTEVITEASIIMTATGYGKYLIEPTDIDGAGETFIIDLAQPRNVHPATADIENAIVQDIDALESITKETEASRQAAAREVDAMIDEEFDRLLESYKRQRADEAISEMYEAAEHVKRREVETALEKLEKQGTLTDNQRETISSMADTLINQLLAAPTKSLRDAAAEDDWTTIQTAMTLFDPNFGGDTPQPDRPDDIPRAAERGDISGDDLPDDVPNHIAEKVSDG</sequence>